<name>RL36_RICPU</name>
<accession>C4K281</accession>
<protein>
    <recommendedName>
        <fullName evidence="1">Large ribosomal subunit protein bL36</fullName>
    </recommendedName>
    <alternativeName>
        <fullName evidence="2">50S ribosomal protein L36</fullName>
    </alternativeName>
</protein>
<proteinExistence type="inferred from homology"/>
<feature type="chain" id="PRO_1000204560" description="Large ribosomal subunit protein bL36">
    <location>
        <begin position="1"/>
        <end position="41"/>
    </location>
</feature>
<evidence type="ECO:0000255" key="1">
    <source>
        <dbReference type="HAMAP-Rule" id="MF_00251"/>
    </source>
</evidence>
<evidence type="ECO:0000305" key="2"/>
<dbReference type="EMBL" id="CP001227">
    <property type="protein sequence ID" value="ACR47940.1"/>
    <property type="molecule type" value="Genomic_DNA"/>
</dbReference>
<dbReference type="SMR" id="C4K281"/>
<dbReference type="KEGG" id="rpk:RPR_05510"/>
<dbReference type="HOGENOM" id="CLU_135723_3_2_5"/>
<dbReference type="Proteomes" id="UP000005015">
    <property type="component" value="Chromosome"/>
</dbReference>
<dbReference type="GO" id="GO:1990904">
    <property type="term" value="C:ribonucleoprotein complex"/>
    <property type="evidence" value="ECO:0007669"/>
    <property type="project" value="UniProtKB-KW"/>
</dbReference>
<dbReference type="GO" id="GO:0005840">
    <property type="term" value="C:ribosome"/>
    <property type="evidence" value="ECO:0007669"/>
    <property type="project" value="UniProtKB-KW"/>
</dbReference>
<dbReference type="GO" id="GO:0003735">
    <property type="term" value="F:structural constituent of ribosome"/>
    <property type="evidence" value="ECO:0007669"/>
    <property type="project" value="InterPro"/>
</dbReference>
<dbReference type="GO" id="GO:0006412">
    <property type="term" value="P:translation"/>
    <property type="evidence" value="ECO:0007669"/>
    <property type="project" value="UniProtKB-UniRule"/>
</dbReference>
<dbReference type="HAMAP" id="MF_00251">
    <property type="entry name" value="Ribosomal_bL36"/>
    <property type="match status" value="1"/>
</dbReference>
<dbReference type="InterPro" id="IPR000473">
    <property type="entry name" value="Ribosomal_bL36"/>
</dbReference>
<dbReference type="InterPro" id="IPR035977">
    <property type="entry name" value="Ribosomal_bL36_sp"/>
</dbReference>
<dbReference type="InterPro" id="IPR047621">
    <property type="entry name" value="Ribosomal_L36_bact"/>
</dbReference>
<dbReference type="NCBIfam" id="NF002021">
    <property type="entry name" value="PRK00831.1"/>
    <property type="match status" value="1"/>
</dbReference>
<dbReference type="PANTHER" id="PTHR47781">
    <property type="entry name" value="50S RIBOSOMAL PROTEIN L36 2"/>
    <property type="match status" value="1"/>
</dbReference>
<dbReference type="PANTHER" id="PTHR47781:SF1">
    <property type="entry name" value="LARGE RIBOSOMAL SUBUNIT PROTEIN BL36B"/>
    <property type="match status" value="1"/>
</dbReference>
<dbReference type="Pfam" id="PF00444">
    <property type="entry name" value="Ribosomal_L36"/>
    <property type="match status" value="1"/>
</dbReference>
<dbReference type="SUPFAM" id="SSF57840">
    <property type="entry name" value="Ribosomal protein L36"/>
    <property type="match status" value="1"/>
</dbReference>
<dbReference type="PROSITE" id="PS00828">
    <property type="entry name" value="RIBOSOMAL_L36"/>
    <property type="match status" value="1"/>
</dbReference>
<keyword id="KW-0687">Ribonucleoprotein</keyword>
<keyword id="KW-0689">Ribosomal protein</keyword>
<reference key="1">
    <citation type="journal article" date="2009" name="PLoS ONE">
        <title>Genome sequence of the endosymbiont Rickettsia peacockii and comparison with virulent Rickettsia rickettsii: identification of virulence factors.</title>
        <authorList>
            <person name="Felsheim R.F."/>
            <person name="Kurtti T.J."/>
            <person name="Munderloh U.G."/>
        </authorList>
    </citation>
    <scope>NUCLEOTIDE SEQUENCE [LARGE SCALE GENOMIC DNA]</scope>
    <source>
        <strain>Rustic</strain>
    </source>
</reference>
<sequence>MKVVSSLKSLKKRDKDCQIVKRRGKIFVINKKNKRFKAKQG</sequence>
<comment type="similarity">
    <text evidence="1">Belongs to the bacterial ribosomal protein bL36 family.</text>
</comment>
<gene>
    <name evidence="1" type="primary">rpmJ</name>
    <name type="ordered locus">RPR_05510</name>
</gene>
<organism>
    <name type="scientific">Rickettsia peacockii (strain Rustic)</name>
    <dbReference type="NCBI Taxonomy" id="562019"/>
    <lineage>
        <taxon>Bacteria</taxon>
        <taxon>Pseudomonadati</taxon>
        <taxon>Pseudomonadota</taxon>
        <taxon>Alphaproteobacteria</taxon>
        <taxon>Rickettsiales</taxon>
        <taxon>Rickettsiaceae</taxon>
        <taxon>Rickettsieae</taxon>
        <taxon>Rickettsia</taxon>
        <taxon>spotted fever group</taxon>
    </lineage>
</organism>